<proteinExistence type="inferred from homology"/>
<gene>
    <name type="primary">yvaQ</name>
    <name type="ordered locus">BSU33690</name>
</gene>
<keyword id="KW-1003">Cell membrane</keyword>
<keyword id="KW-0175">Coiled coil</keyword>
<keyword id="KW-0472">Membrane</keyword>
<keyword id="KW-1185">Reference proteome</keyword>
<keyword id="KW-0732">Signal</keyword>
<keyword id="KW-0807">Transducer</keyword>
<keyword id="KW-0812">Transmembrane</keyword>
<keyword id="KW-1133">Transmembrane helix</keyword>
<feature type="signal peptide" evidence="2">
    <location>
        <begin position="1"/>
        <end position="31"/>
    </location>
</feature>
<feature type="chain" id="PRO_0000388355" description="Putative sensory transducer protein YvaQ">
    <location>
        <begin position="32"/>
        <end position="566"/>
    </location>
</feature>
<feature type="transmembrane region" description="Helical" evidence="2">
    <location>
        <begin position="186"/>
        <end position="206"/>
    </location>
</feature>
<feature type="domain" description="HAMP" evidence="3">
    <location>
        <begin position="208"/>
        <end position="261"/>
    </location>
</feature>
<feature type="domain" description="Methyl-accepting transducer" evidence="4">
    <location>
        <begin position="280"/>
        <end position="530"/>
    </location>
</feature>
<feature type="coiled-coil region" evidence="2">
    <location>
        <begin position="74"/>
        <end position="110"/>
    </location>
</feature>
<feature type="coiled-coil region" evidence="2">
    <location>
        <begin position="536"/>
        <end position="566"/>
    </location>
</feature>
<name>YVAQ_BACSU</name>
<dbReference type="EMBL" id="AL009126">
    <property type="protein sequence ID" value="CAB15374.1"/>
    <property type="molecule type" value="Genomic_DNA"/>
</dbReference>
<dbReference type="PIR" id="F70028">
    <property type="entry name" value="F70028"/>
</dbReference>
<dbReference type="RefSeq" id="NP_391249.1">
    <property type="nucleotide sequence ID" value="NC_000964.3"/>
</dbReference>
<dbReference type="RefSeq" id="WP_003228375.1">
    <property type="nucleotide sequence ID" value="NZ_OZ025638.1"/>
</dbReference>
<dbReference type="SMR" id="O32239"/>
<dbReference type="FunCoup" id="O32239">
    <property type="interactions" value="145"/>
</dbReference>
<dbReference type="IntAct" id="O32239">
    <property type="interactions" value="10"/>
</dbReference>
<dbReference type="STRING" id="224308.BSU33690"/>
<dbReference type="jPOST" id="O32239"/>
<dbReference type="PaxDb" id="224308-BSU33690"/>
<dbReference type="EnsemblBacteria" id="CAB15374">
    <property type="protein sequence ID" value="CAB15374"/>
    <property type="gene ID" value="BSU_33690"/>
</dbReference>
<dbReference type="GeneID" id="938479"/>
<dbReference type="KEGG" id="bsu:BSU33690"/>
<dbReference type="PATRIC" id="fig|224308.179.peg.3654"/>
<dbReference type="eggNOG" id="COG0840">
    <property type="taxonomic scope" value="Bacteria"/>
</dbReference>
<dbReference type="InParanoid" id="O32239"/>
<dbReference type="OrthoDB" id="9804712at2"/>
<dbReference type="PhylomeDB" id="O32239"/>
<dbReference type="BioCyc" id="BSUB:BSU33690-MONOMER"/>
<dbReference type="Proteomes" id="UP000001570">
    <property type="component" value="Chromosome"/>
</dbReference>
<dbReference type="GO" id="GO:0005886">
    <property type="term" value="C:plasma membrane"/>
    <property type="evidence" value="ECO:0007669"/>
    <property type="project" value="UniProtKB-SubCell"/>
</dbReference>
<dbReference type="GO" id="GO:0004888">
    <property type="term" value="F:transmembrane signaling receptor activity"/>
    <property type="evidence" value="ECO:0007669"/>
    <property type="project" value="InterPro"/>
</dbReference>
<dbReference type="GO" id="GO:0006935">
    <property type="term" value="P:chemotaxis"/>
    <property type="evidence" value="ECO:0000318"/>
    <property type="project" value="GO_Central"/>
</dbReference>
<dbReference type="GO" id="GO:0007165">
    <property type="term" value="P:signal transduction"/>
    <property type="evidence" value="ECO:0007669"/>
    <property type="project" value="UniProtKB-KW"/>
</dbReference>
<dbReference type="CDD" id="cd06225">
    <property type="entry name" value="HAMP"/>
    <property type="match status" value="1"/>
</dbReference>
<dbReference type="CDD" id="cd19411">
    <property type="entry name" value="MCP2201-like_sensor"/>
    <property type="match status" value="1"/>
</dbReference>
<dbReference type="CDD" id="cd11386">
    <property type="entry name" value="MCP_signal"/>
    <property type="match status" value="1"/>
</dbReference>
<dbReference type="Gene3D" id="6.10.340.10">
    <property type="match status" value="1"/>
</dbReference>
<dbReference type="Gene3D" id="1.10.287.950">
    <property type="entry name" value="Methyl-accepting chemotaxis protein"/>
    <property type="match status" value="1"/>
</dbReference>
<dbReference type="InterPro" id="IPR004090">
    <property type="entry name" value="Chemotax_Me-accpt_rcpt"/>
</dbReference>
<dbReference type="InterPro" id="IPR003660">
    <property type="entry name" value="HAMP_dom"/>
</dbReference>
<dbReference type="InterPro" id="IPR024478">
    <property type="entry name" value="HlyB_4HB_MCP"/>
</dbReference>
<dbReference type="InterPro" id="IPR004089">
    <property type="entry name" value="MCPsignal_dom"/>
</dbReference>
<dbReference type="InterPro" id="IPR047347">
    <property type="entry name" value="YvaQ-like_sensor"/>
</dbReference>
<dbReference type="PANTHER" id="PTHR32089">
    <property type="entry name" value="METHYL-ACCEPTING CHEMOTAXIS PROTEIN MCPB"/>
    <property type="match status" value="1"/>
</dbReference>
<dbReference type="PANTHER" id="PTHR32089:SF114">
    <property type="entry name" value="METHYL-ACCEPTING CHEMOTAXIS PROTEIN MCPB"/>
    <property type="match status" value="1"/>
</dbReference>
<dbReference type="Pfam" id="PF12729">
    <property type="entry name" value="4HB_MCP_1"/>
    <property type="match status" value="1"/>
</dbReference>
<dbReference type="Pfam" id="PF00672">
    <property type="entry name" value="HAMP"/>
    <property type="match status" value="1"/>
</dbReference>
<dbReference type="Pfam" id="PF00015">
    <property type="entry name" value="MCPsignal"/>
    <property type="match status" value="1"/>
</dbReference>
<dbReference type="PRINTS" id="PR00260">
    <property type="entry name" value="CHEMTRNSDUCR"/>
</dbReference>
<dbReference type="SMART" id="SM00304">
    <property type="entry name" value="HAMP"/>
    <property type="match status" value="1"/>
</dbReference>
<dbReference type="SMART" id="SM00283">
    <property type="entry name" value="MA"/>
    <property type="match status" value="1"/>
</dbReference>
<dbReference type="SUPFAM" id="SSF58104">
    <property type="entry name" value="Methyl-accepting chemotaxis protein (MCP) signaling domain"/>
    <property type="match status" value="1"/>
</dbReference>
<dbReference type="PROSITE" id="PS50111">
    <property type="entry name" value="CHEMOTAXIS_TRANSDUC_2"/>
    <property type="match status" value="1"/>
</dbReference>
<dbReference type="PROSITE" id="PS50885">
    <property type="entry name" value="HAMP"/>
    <property type="match status" value="1"/>
</dbReference>
<evidence type="ECO:0000250" key="1"/>
<evidence type="ECO:0000255" key="2"/>
<evidence type="ECO:0000255" key="3">
    <source>
        <dbReference type="PROSITE-ProRule" id="PRU00102"/>
    </source>
</evidence>
<evidence type="ECO:0000255" key="4">
    <source>
        <dbReference type="PROSITE-ProRule" id="PRU00284"/>
    </source>
</evidence>
<evidence type="ECO:0000305" key="5"/>
<protein>
    <recommendedName>
        <fullName>Putative sensory transducer protein YvaQ</fullName>
    </recommendedName>
    <alternativeName>
        <fullName>Methyl-accepting chemotaxis protein</fullName>
    </alternativeName>
</protein>
<sequence>MRLTISRKFSLVFLTLILINLLVGGIGVLNMQHIIQKTDEINTKWIDGIKGITSINYVTEHLSSKEKDFLIYTDKSKMDTLDQEMNQIMEDINQKLDNYEKTISTDKEQKLFEQLQTKVNTYMDIHAQIIESGRTNDMDKARGLLVQTEASFEDMKKTITQLVDLNQEGSNTAVKETKAVYHKGLIYTALLVAASILISIFIWLYITRNIVKPIIRMKESANHIAEGDLSNDMEALNSKDELGDLNEALQKMVGNLRDIVGYSKDISSRVLSSSQVLATATNETRSGSKHITETMNEMAEGSEQQAQDAVTIAESMNEFTESIDKAYNHGITISDTSQNVLELAVSGNENMATSLQQMKTIHHIVEEAVHKVRSLEQHSQDINKLVQVINGIAEQTNLLSLNAAIEAARAGESGKGFAVVAEEVRKLADGVSDSVQDITRIVNGTQQEIHTVITYLESSFTEVEKGTENLTDTGQAMQHIKQSVTHVADSIKEVTDGLKQLTNQSITINQSIENIASVSEESAAGIEETFSITEQSAHSMDQVLLNAEELEQLANELNEKMGQFTI</sequence>
<comment type="function">
    <text evidence="1">Chemotactic-signal transducers respond to changes in the concentration of attractants and repellents in the environment, transduce a signal from the outside to the inside of the cell, and facilitate sensory adaptation through the variation of the level of methylation. Attractants increase the level of methylation while repellents decrease the level of methylation (By similarity).</text>
</comment>
<comment type="subcellular location">
    <subcellularLocation>
        <location evidence="5">Cell membrane</location>
        <topology evidence="5">Single-pass membrane protein</topology>
    </subcellularLocation>
</comment>
<comment type="similarity">
    <text evidence="5">Belongs to the methyl-accepting chemotaxis (MCP) protein family.</text>
</comment>
<organism>
    <name type="scientific">Bacillus subtilis (strain 168)</name>
    <dbReference type="NCBI Taxonomy" id="224308"/>
    <lineage>
        <taxon>Bacteria</taxon>
        <taxon>Bacillati</taxon>
        <taxon>Bacillota</taxon>
        <taxon>Bacilli</taxon>
        <taxon>Bacillales</taxon>
        <taxon>Bacillaceae</taxon>
        <taxon>Bacillus</taxon>
    </lineage>
</organism>
<reference key="1">
    <citation type="journal article" date="1997" name="Nature">
        <title>The complete genome sequence of the Gram-positive bacterium Bacillus subtilis.</title>
        <authorList>
            <person name="Kunst F."/>
            <person name="Ogasawara N."/>
            <person name="Moszer I."/>
            <person name="Albertini A.M."/>
            <person name="Alloni G."/>
            <person name="Azevedo V."/>
            <person name="Bertero M.G."/>
            <person name="Bessieres P."/>
            <person name="Bolotin A."/>
            <person name="Borchert S."/>
            <person name="Borriss R."/>
            <person name="Boursier L."/>
            <person name="Brans A."/>
            <person name="Braun M."/>
            <person name="Brignell S.C."/>
            <person name="Bron S."/>
            <person name="Brouillet S."/>
            <person name="Bruschi C.V."/>
            <person name="Caldwell B."/>
            <person name="Capuano V."/>
            <person name="Carter N.M."/>
            <person name="Choi S.-K."/>
            <person name="Codani J.-J."/>
            <person name="Connerton I.F."/>
            <person name="Cummings N.J."/>
            <person name="Daniel R.A."/>
            <person name="Denizot F."/>
            <person name="Devine K.M."/>
            <person name="Duesterhoeft A."/>
            <person name="Ehrlich S.D."/>
            <person name="Emmerson P.T."/>
            <person name="Entian K.-D."/>
            <person name="Errington J."/>
            <person name="Fabret C."/>
            <person name="Ferrari E."/>
            <person name="Foulger D."/>
            <person name="Fritz C."/>
            <person name="Fujita M."/>
            <person name="Fujita Y."/>
            <person name="Fuma S."/>
            <person name="Galizzi A."/>
            <person name="Galleron N."/>
            <person name="Ghim S.-Y."/>
            <person name="Glaser P."/>
            <person name="Goffeau A."/>
            <person name="Golightly E.J."/>
            <person name="Grandi G."/>
            <person name="Guiseppi G."/>
            <person name="Guy B.J."/>
            <person name="Haga K."/>
            <person name="Haiech J."/>
            <person name="Harwood C.R."/>
            <person name="Henaut A."/>
            <person name="Hilbert H."/>
            <person name="Holsappel S."/>
            <person name="Hosono S."/>
            <person name="Hullo M.-F."/>
            <person name="Itaya M."/>
            <person name="Jones L.-M."/>
            <person name="Joris B."/>
            <person name="Karamata D."/>
            <person name="Kasahara Y."/>
            <person name="Klaerr-Blanchard M."/>
            <person name="Klein C."/>
            <person name="Kobayashi Y."/>
            <person name="Koetter P."/>
            <person name="Koningstein G."/>
            <person name="Krogh S."/>
            <person name="Kumano M."/>
            <person name="Kurita K."/>
            <person name="Lapidus A."/>
            <person name="Lardinois S."/>
            <person name="Lauber J."/>
            <person name="Lazarevic V."/>
            <person name="Lee S.-M."/>
            <person name="Levine A."/>
            <person name="Liu H."/>
            <person name="Masuda S."/>
            <person name="Mauel C."/>
            <person name="Medigue C."/>
            <person name="Medina N."/>
            <person name="Mellado R.P."/>
            <person name="Mizuno M."/>
            <person name="Moestl D."/>
            <person name="Nakai S."/>
            <person name="Noback M."/>
            <person name="Noone D."/>
            <person name="O'Reilly M."/>
            <person name="Ogawa K."/>
            <person name="Ogiwara A."/>
            <person name="Oudega B."/>
            <person name="Park S.-H."/>
            <person name="Parro V."/>
            <person name="Pohl T.M."/>
            <person name="Portetelle D."/>
            <person name="Porwollik S."/>
            <person name="Prescott A.M."/>
            <person name="Presecan E."/>
            <person name="Pujic P."/>
            <person name="Purnelle B."/>
            <person name="Rapoport G."/>
            <person name="Rey M."/>
            <person name="Reynolds S."/>
            <person name="Rieger M."/>
            <person name="Rivolta C."/>
            <person name="Rocha E."/>
            <person name="Roche B."/>
            <person name="Rose M."/>
            <person name="Sadaie Y."/>
            <person name="Sato T."/>
            <person name="Scanlan E."/>
            <person name="Schleich S."/>
            <person name="Schroeter R."/>
            <person name="Scoffone F."/>
            <person name="Sekiguchi J."/>
            <person name="Sekowska A."/>
            <person name="Seror S.J."/>
            <person name="Serror P."/>
            <person name="Shin B.-S."/>
            <person name="Soldo B."/>
            <person name="Sorokin A."/>
            <person name="Tacconi E."/>
            <person name="Takagi T."/>
            <person name="Takahashi H."/>
            <person name="Takemaru K."/>
            <person name="Takeuchi M."/>
            <person name="Tamakoshi A."/>
            <person name="Tanaka T."/>
            <person name="Terpstra P."/>
            <person name="Tognoni A."/>
            <person name="Tosato V."/>
            <person name="Uchiyama S."/>
            <person name="Vandenbol M."/>
            <person name="Vannier F."/>
            <person name="Vassarotti A."/>
            <person name="Viari A."/>
            <person name="Wambutt R."/>
            <person name="Wedler E."/>
            <person name="Wedler H."/>
            <person name="Weitzenegger T."/>
            <person name="Winters P."/>
            <person name="Wipat A."/>
            <person name="Yamamoto H."/>
            <person name="Yamane K."/>
            <person name="Yasumoto K."/>
            <person name="Yata K."/>
            <person name="Yoshida K."/>
            <person name="Yoshikawa H.-F."/>
            <person name="Zumstein E."/>
            <person name="Yoshikawa H."/>
            <person name="Danchin A."/>
        </authorList>
    </citation>
    <scope>NUCLEOTIDE SEQUENCE [LARGE SCALE GENOMIC DNA]</scope>
    <source>
        <strain>168</strain>
    </source>
</reference>
<accession>O32239</accession>